<comment type="function">
    <text evidence="1">Splits dipeptides with a prolyl residue in the C-terminal position.</text>
</comment>
<comment type="catalytic activity">
    <reaction evidence="1">
        <text>Xaa-L-Pro dipeptide + H2O = an L-alpha-amino acid + L-proline</text>
        <dbReference type="Rhea" id="RHEA:76407"/>
        <dbReference type="ChEBI" id="CHEBI:15377"/>
        <dbReference type="ChEBI" id="CHEBI:59869"/>
        <dbReference type="ChEBI" id="CHEBI:60039"/>
        <dbReference type="ChEBI" id="CHEBI:195196"/>
        <dbReference type="EC" id="3.4.13.9"/>
    </reaction>
</comment>
<comment type="cofactor">
    <cofactor evidence="1">
        <name>Mn(2+)</name>
        <dbReference type="ChEBI" id="CHEBI:29035"/>
    </cofactor>
    <text evidence="1">Binds 2 manganese ions per subunit.</text>
</comment>
<comment type="similarity">
    <text evidence="1">Belongs to the peptidase M24B family. Bacterial-type prolidase subfamily.</text>
</comment>
<dbReference type="EC" id="3.4.13.9" evidence="1"/>
<dbReference type="EMBL" id="CP001048">
    <property type="protein sequence ID" value="ACC87279.1"/>
    <property type="molecule type" value="Genomic_DNA"/>
</dbReference>
<dbReference type="RefSeq" id="WP_011191548.1">
    <property type="nucleotide sequence ID" value="NZ_CP009780.1"/>
</dbReference>
<dbReference type="SMR" id="B2K0Z7"/>
<dbReference type="MEROPS" id="M24.003"/>
<dbReference type="KEGG" id="ypb:YPTS_0284"/>
<dbReference type="PATRIC" id="fig|502801.10.peg.3962"/>
<dbReference type="GO" id="GO:0005829">
    <property type="term" value="C:cytosol"/>
    <property type="evidence" value="ECO:0007669"/>
    <property type="project" value="TreeGrafter"/>
</dbReference>
<dbReference type="GO" id="GO:0004177">
    <property type="term" value="F:aminopeptidase activity"/>
    <property type="evidence" value="ECO:0007669"/>
    <property type="project" value="TreeGrafter"/>
</dbReference>
<dbReference type="GO" id="GO:0046872">
    <property type="term" value="F:metal ion binding"/>
    <property type="evidence" value="ECO:0007669"/>
    <property type="project" value="UniProtKB-KW"/>
</dbReference>
<dbReference type="GO" id="GO:0008235">
    <property type="term" value="F:metalloexopeptidase activity"/>
    <property type="evidence" value="ECO:0007669"/>
    <property type="project" value="UniProtKB-UniRule"/>
</dbReference>
<dbReference type="GO" id="GO:0016795">
    <property type="term" value="F:phosphoric triester hydrolase activity"/>
    <property type="evidence" value="ECO:0007669"/>
    <property type="project" value="InterPro"/>
</dbReference>
<dbReference type="GO" id="GO:0102009">
    <property type="term" value="F:proline dipeptidase activity"/>
    <property type="evidence" value="ECO:0007669"/>
    <property type="project" value="UniProtKB-EC"/>
</dbReference>
<dbReference type="GO" id="GO:0006508">
    <property type="term" value="P:proteolysis"/>
    <property type="evidence" value="ECO:0007669"/>
    <property type="project" value="UniProtKB-KW"/>
</dbReference>
<dbReference type="Gene3D" id="3.90.230.10">
    <property type="entry name" value="Creatinase/methionine aminopeptidase superfamily"/>
    <property type="match status" value="1"/>
</dbReference>
<dbReference type="Gene3D" id="3.40.350.10">
    <property type="entry name" value="Creatinase/prolidase N-terminal domain"/>
    <property type="match status" value="1"/>
</dbReference>
<dbReference type="HAMAP" id="MF_01279">
    <property type="entry name" value="X_Pro_dipeptid"/>
    <property type="match status" value="1"/>
</dbReference>
<dbReference type="InterPro" id="IPR029149">
    <property type="entry name" value="Creatin/AminoP/Spt16_N"/>
</dbReference>
<dbReference type="InterPro" id="IPR036005">
    <property type="entry name" value="Creatinase/aminopeptidase-like"/>
</dbReference>
<dbReference type="InterPro" id="IPR048819">
    <property type="entry name" value="PepQ_N"/>
</dbReference>
<dbReference type="InterPro" id="IPR000994">
    <property type="entry name" value="Pept_M24"/>
</dbReference>
<dbReference type="InterPro" id="IPR001131">
    <property type="entry name" value="Peptidase_M24B_aminopep-P_CS"/>
</dbReference>
<dbReference type="InterPro" id="IPR052433">
    <property type="entry name" value="X-Pro_dipept-like"/>
</dbReference>
<dbReference type="InterPro" id="IPR022846">
    <property type="entry name" value="X_Pro_dipept"/>
</dbReference>
<dbReference type="NCBIfam" id="NF010133">
    <property type="entry name" value="PRK13607.1"/>
    <property type="match status" value="1"/>
</dbReference>
<dbReference type="PANTHER" id="PTHR43226">
    <property type="entry name" value="XAA-PRO AMINOPEPTIDASE 3"/>
    <property type="match status" value="1"/>
</dbReference>
<dbReference type="PANTHER" id="PTHR43226:SF8">
    <property type="entry name" value="XAA-PRO DIPEPTIDASE"/>
    <property type="match status" value="1"/>
</dbReference>
<dbReference type="Pfam" id="PF21216">
    <property type="entry name" value="PepQ_N"/>
    <property type="match status" value="1"/>
</dbReference>
<dbReference type="Pfam" id="PF00557">
    <property type="entry name" value="Peptidase_M24"/>
    <property type="match status" value="1"/>
</dbReference>
<dbReference type="SUPFAM" id="SSF55920">
    <property type="entry name" value="Creatinase/aminopeptidase"/>
    <property type="match status" value="1"/>
</dbReference>
<dbReference type="PROSITE" id="PS00491">
    <property type="entry name" value="PROLINE_PEPTIDASE"/>
    <property type="match status" value="1"/>
</dbReference>
<reference key="1">
    <citation type="submission" date="2008-04" db="EMBL/GenBank/DDBJ databases">
        <title>Complete sequence of Yersinia pseudotuberculosis PB1/+.</title>
        <authorList>
            <person name="Copeland A."/>
            <person name="Lucas S."/>
            <person name="Lapidus A."/>
            <person name="Glavina del Rio T."/>
            <person name="Dalin E."/>
            <person name="Tice H."/>
            <person name="Bruce D."/>
            <person name="Goodwin L."/>
            <person name="Pitluck S."/>
            <person name="Munk A.C."/>
            <person name="Brettin T."/>
            <person name="Detter J.C."/>
            <person name="Han C."/>
            <person name="Tapia R."/>
            <person name="Schmutz J."/>
            <person name="Larimer F."/>
            <person name="Land M."/>
            <person name="Hauser L."/>
            <person name="Challacombe J.F."/>
            <person name="Green L."/>
            <person name="Lindler L.E."/>
            <person name="Nikolich M.P."/>
            <person name="Richardson P."/>
        </authorList>
    </citation>
    <scope>NUCLEOTIDE SEQUENCE [LARGE SCALE GENOMIC DNA]</scope>
    <source>
        <strain>PB1/+</strain>
    </source>
</reference>
<accession>B2K0Z7</accession>
<name>PEPQ_YERPB</name>
<sequence length="443" mass="50882">METLASLYNEHLSTLQQRTRDVLERHQLDALLIHSGELQRLFLDDRDYPFKVNPQFKAWVPVTEVPNCWLWVDGVNTPKLWFYSPVDYWHSVEPLPDSFWTKNIDVQPLLNADDIAQQLPVQRERVAYIGYAQQRAQALGFSAENINPQPVLDYLHYYRSYKTDYELACMREAQKTAVVGHRAAYEAFQSGMSEFDINLAYLMATGHRDTDVPYDNIVALNEHSAVLHYTILQHQPPAEIRSFLIDAGAEYNGYAADLTRTYAADRDSDFAALISDLNTEQLALIDTIKSGERYTDYHVQMHQRIAKLLRTHNLVTGISEEAMVEQGITCPFLPHGLGHPLGLQVHDTAGFMQDDKGTNLNAPSKYPYLRCTRVLQPRMVLTIEPGLYFIDSLLAPWRIGEFSKHFNWDRIDALKPYGGIRIEDNIVIHDKRVENMTRDLKLA</sequence>
<feature type="chain" id="PRO_1000140337" description="Xaa-Pro dipeptidase">
    <location>
        <begin position="1"/>
        <end position="443"/>
    </location>
</feature>
<feature type="binding site" evidence="1">
    <location>
        <position position="246"/>
    </location>
    <ligand>
        <name>Mn(2+)</name>
        <dbReference type="ChEBI" id="CHEBI:29035"/>
        <label>2</label>
    </ligand>
</feature>
<feature type="binding site" evidence="1">
    <location>
        <position position="257"/>
    </location>
    <ligand>
        <name>Mn(2+)</name>
        <dbReference type="ChEBI" id="CHEBI:29035"/>
        <label>1</label>
    </ligand>
</feature>
<feature type="binding site" evidence="1">
    <location>
        <position position="257"/>
    </location>
    <ligand>
        <name>Mn(2+)</name>
        <dbReference type="ChEBI" id="CHEBI:29035"/>
        <label>2</label>
    </ligand>
</feature>
<feature type="binding site" evidence="1">
    <location>
        <position position="339"/>
    </location>
    <ligand>
        <name>Mn(2+)</name>
        <dbReference type="ChEBI" id="CHEBI:29035"/>
        <label>1</label>
    </ligand>
</feature>
<feature type="binding site" evidence="1">
    <location>
        <position position="384"/>
    </location>
    <ligand>
        <name>Mn(2+)</name>
        <dbReference type="ChEBI" id="CHEBI:29035"/>
        <label>1</label>
    </ligand>
</feature>
<feature type="binding site" evidence="1">
    <location>
        <position position="423"/>
    </location>
    <ligand>
        <name>Mn(2+)</name>
        <dbReference type="ChEBI" id="CHEBI:29035"/>
        <label>1</label>
    </ligand>
</feature>
<feature type="binding site" evidence="1">
    <location>
        <position position="423"/>
    </location>
    <ligand>
        <name>Mn(2+)</name>
        <dbReference type="ChEBI" id="CHEBI:29035"/>
        <label>2</label>
    </ligand>
</feature>
<keyword id="KW-0224">Dipeptidase</keyword>
<keyword id="KW-0378">Hydrolase</keyword>
<keyword id="KW-0464">Manganese</keyword>
<keyword id="KW-0479">Metal-binding</keyword>
<keyword id="KW-0482">Metalloprotease</keyword>
<keyword id="KW-0645">Protease</keyword>
<organism>
    <name type="scientific">Yersinia pseudotuberculosis serotype IB (strain PB1/+)</name>
    <dbReference type="NCBI Taxonomy" id="502801"/>
    <lineage>
        <taxon>Bacteria</taxon>
        <taxon>Pseudomonadati</taxon>
        <taxon>Pseudomonadota</taxon>
        <taxon>Gammaproteobacteria</taxon>
        <taxon>Enterobacterales</taxon>
        <taxon>Yersiniaceae</taxon>
        <taxon>Yersinia</taxon>
    </lineage>
</organism>
<evidence type="ECO:0000255" key="1">
    <source>
        <dbReference type="HAMAP-Rule" id="MF_01279"/>
    </source>
</evidence>
<protein>
    <recommendedName>
        <fullName evidence="1">Xaa-Pro dipeptidase</fullName>
        <shortName evidence="1">X-Pro dipeptidase</shortName>
        <ecNumber evidence="1">3.4.13.9</ecNumber>
    </recommendedName>
    <alternativeName>
        <fullName evidence="1">Imidodipeptidase</fullName>
    </alternativeName>
    <alternativeName>
        <fullName evidence="1">Proline dipeptidase</fullName>
        <shortName evidence="1">Prolidase</shortName>
    </alternativeName>
</protein>
<proteinExistence type="inferred from homology"/>
<gene>
    <name evidence="1" type="primary">pepQ</name>
    <name type="ordered locus">YPTS_0284</name>
</gene>